<keyword id="KW-0963">Cytoplasm</keyword>
<keyword id="KW-0217">Developmental protein</keyword>
<keyword id="KW-0539">Nucleus</keyword>
<keyword id="KW-1185">Reference proteome</keyword>
<name>MB212_MOUSE</name>
<organism>
    <name type="scientific">Mus musculus</name>
    <name type="common">Mouse</name>
    <dbReference type="NCBI Taxonomy" id="10090"/>
    <lineage>
        <taxon>Eukaryota</taxon>
        <taxon>Metazoa</taxon>
        <taxon>Chordata</taxon>
        <taxon>Craniata</taxon>
        <taxon>Vertebrata</taxon>
        <taxon>Euteleostomi</taxon>
        <taxon>Mammalia</taxon>
        <taxon>Eutheria</taxon>
        <taxon>Euarchontoglires</taxon>
        <taxon>Glires</taxon>
        <taxon>Rodentia</taxon>
        <taxon>Myomorpha</taxon>
        <taxon>Muroidea</taxon>
        <taxon>Muridae</taxon>
        <taxon>Murinae</taxon>
        <taxon>Mus</taxon>
        <taxon>Mus</taxon>
    </lineage>
</organism>
<dbReference type="EMBL" id="AF149877">
    <property type="protein sequence ID" value="AAD40478.1"/>
    <property type="molecule type" value="mRNA"/>
</dbReference>
<dbReference type="EMBL" id="AF126427">
    <property type="protein sequence ID" value="AAD39141.1"/>
    <property type="molecule type" value="mRNA"/>
</dbReference>
<dbReference type="EMBL" id="AF223425">
    <property type="protein sequence ID" value="AAK49026.1"/>
    <property type="molecule type" value="Genomic_DNA"/>
</dbReference>
<dbReference type="EMBL" id="AK053645">
    <property type="protein sequence ID" value="BAC35460.1"/>
    <property type="molecule type" value="mRNA"/>
</dbReference>
<dbReference type="EMBL" id="BC046628">
    <property type="protein sequence ID" value="AAH46628.1"/>
    <property type="molecule type" value="mRNA"/>
</dbReference>
<dbReference type="CCDS" id="CCDS17447.1"/>
<dbReference type="RefSeq" id="NP_035969.2">
    <property type="nucleotide sequence ID" value="NM_011839.3"/>
</dbReference>
<dbReference type="SMR" id="Q8BPP1"/>
<dbReference type="BioGRID" id="204804">
    <property type="interactions" value="1"/>
</dbReference>
<dbReference type="FunCoup" id="Q8BPP1">
    <property type="interactions" value="1851"/>
</dbReference>
<dbReference type="STRING" id="10090.ENSMUSP00000076729"/>
<dbReference type="iPTMnet" id="Q8BPP1"/>
<dbReference type="PhosphoSitePlus" id="Q8BPP1"/>
<dbReference type="jPOST" id="Q8BPP1"/>
<dbReference type="PaxDb" id="10090-ENSMUSP00000076729"/>
<dbReference type="ProteomicsDB" id="295702"/>
<dbReference type="Antibodypedia" id="45517">
    <property type="antibodies" value="43 antibodies from 14 providers"/>
</dbReference>
<dbReference type="DNASU" id="23937"/>
<dbReference type="Ensembl" id="ENSMUST00000077524.4">
    <property type="protein sequence ID" value="ENSMUSP00000076729.4"/>
    <property type="gene ID" value="ENSMUSG00000057777.6"/>
</dbReference>
<dbReference type="Ensembl" id="ENSMUST00000191695.3">
    <property type="protein sequence ID" value="ENSMUSP00000159542.1"/>
    <property type="gene ID" value="ENSMUSG00000057777.6"/>
</dbReference>
<dbReference type="GeneID" id="23937"/>
<dbReference type="KEGG" id="mmu:23937"/>
<dbReference type="UCSC" id="uc008prj.1">
    <property type="organism name" value="mouse"/>
</dbReference>
<dbReference type="AGR" id="MGI:1346022"/>
<dbReference type="CTD" id="10586"/>
<dbReference type="MGI" id="MGI:1346022">
    <property type="gene designation" value="Mab21l2"/>
</dbReference>
<dbReference type="VEuPathDB" id="HostDB:ENSMUSG00000057777"/>
<dbReference type="eggNOG" id="KOG3963">
    <property type="taxonomic scope" value="Eukaryota"/>
</dbReference>
<dbReference type="GeneTree" id="ENSGT01050000244827"/>
<dbReference type="HOGENOM" id="CLU_045315_0_0_1"/>
<dbReference type="InParanoid" id="Q8BPP1"/>
<dbReference type="OMA" id="WDESCIA"/>
<dbReference type="OrthoDB" id="5961151at2759"/>
<dbReference type="PhylomeDB" id="Q8BPP1"/>
<dbReference type="TreeFam" id="TF315012"/>
<dbReference type="BioGRID-ORCS" id="23937">
    <property type="hits" value="0 hits in 76 CRISPR screens"/>
</dbReference>
<dbReference type="PRO" id="PR:Q8BPP1"/>
<dbReference type="Proteomes" id="UP000000589">
    <property type="component" value="Chromosome 3"/>
</dbReference>
<dbReference type="RNAct" id="Q8BPP1">
    <property type="molecule type" value="protein"/>
</dbReference>
<dbReference type="Bgee" id="ENSMUSG00000057777">
    <property type="expression patterns" value="Expressed in associated mesenchyme of midgut and 152 other cell types or tissues"/>
</dbReference>
<dbReference type="GO" id="GO:0005737">
    <property type="term" value="C:cytoplasm"/>
    <property type="evidence" value="ECO:0000250"/>
    <property type="project" value="UniProtKB"/>
</dbReference>
<dbReference type="GO" id="GO:0005634">
    <property type="term" value="C:nucleus"/>
    <property type="evidence" value="ECO:0000314"/>
    <property type="project" value="MGI"/>
</dbReference>
<dbReference type="GO" id="GO:0043010">
    <property type="term" value="P:camera-type eye development"/>
    <property type="evidence" value="ECO:0000315"/>
    <property type="project" value="MGI"/>
</dbReference>
<dbReference type="GO" id="GO:0008283">
    <property type="term" value="P:cell population proliferation"/>
    <property type="evidence" value="ECO:0000315"/>
    <property type="project" value="MGI"/>
</dbReference>
<dbReference type="GO" id="GO:0010172">
    <property type="term" value="P:embryonic body morphogenesis"/>
    <property type="evidence" value="ECO:0000315"/>
    <property type="project" value="MGI"/>
</dbReference>
<dbReference type="GO" id="GO:0001654">
    <property type="term" value="P:eye development"/>
    <property type="evidence" value="ECO:0000250"/>
    <property type="project" value="UniProtKB"/>
</dbReference>
<dbReference type="GO" id="GO:0008284">
    <property type="term" value="P:positive regulation of cell population proliferation"/>
    <property type="evidence" value="ECO:0000315"/>
    <property type="project" value="MGI"/>
</dbReference>
<dbReference type="FunFam" id="1.10.1410.40:FF:000002">
    <property type="entry name" value="protein mab-21-like 1"/>
    <property type="match status" value="1"/>
</dbReference>
<dbReference type="FunFam" id="3.30.460.90:FF:000001">
    <property type="entry name" value="protein mab-21-like 2"/>
    <property type="match status" value="1"/>
</dbReference>
<dbReference type="Gene3D" id="1.10.1410.40">
    <property type="match status" value="1"/>
</dbReference>
<dbReference type="Gene3D" id="3.30.460.90">
    <property type="match status" value="1"/>
</dbReference>
<dbReference type="InterPro" id="IPR046903">
    <property type="entry name" value="Mab-21-like_nuc_Trfase"/>
</dbReference>
<dbReference type="InterPro" id="IPR046906">
    <property type="entry name" value="Mab-21_HhH/H2TH-like"/>
</dbReference>
<dbReference type="InterPro" id="IPR024810">
    <property type="entry name" value="MAB21L/cGLR"/>
</dbReference>
<dbReference type="PANTHER" id="PTHR10656">
    <property type="entry name" value="CELL FATE DETERMINING PROTEIN MAB21-RELATED"/>
    <property type="match status" value="1"/>
</dbReference>
<dbReference type="PANTHER" id="PTHR10656:SF37">
    <property type="entry name" value="PROTEIN MAB-21-LIKE 2"/>
    <property type="match status" value="1"/>
</dbReference>
<dbReference type="Pfam" id="PF03281">
    <property type="entry name" value="Mab-21"/>
    <property type="match status" value="1"/>
</dbReference>
<dbReference type="Pfam" id="PF20266">
    <property type="entry name" value="Mab-21_C"/>
    <property type="match status" value="1"/>
</dbReference>
<dbReference type="SMART" id="SM01265">
    <property type="entry name" value="Mab-21"/>
    <property type="match status" value="1"/>
</dbReference>
<comment type="function">
    <text evidence="4 6">Required for several aspects of embryonic development including normal development of the eye, notochord, neural tube and other organ tissues, and for embryonic turning.</text>
</comment>
<comment type="subcellular location">
    <subcellularLocation>
        <location evidence="3">Nucleus</location>
    </subcellularLocation>
    <subcellularLocation>
        <location evidence="1">Cytoplasm</location>
    </subcellularLocation>
    <text evidence="1">Predominantly localizes to the nucleus, with some cytoplasmic localization.</text>
</comment>
<comment type="tissue specificity">
    <text evidence="3 7">Expressed in the adult cerebellum and eye, with lower levels in the adult forebrain (PubMed:10556287). In embryos at 10.5 days post-coitum strongly expressed in the rostral and distal regions of the developing neural retina, with no expression immediately adjacent to the closing optic fissure. Expression is also observed in the dorsal and ventral aspects of the developing forelimb bud and in the developing pharyngeal arches, as well as in the midbrain (PubMed:24906020).</text>
</comment>
<comment type="developmental stage">
    <text evidence="2 3 4 5 6">Expressed in the developing dorsal midbrain, the posterior portion of the mesencephalon and the retinal primordium of the optic cup. At 10 dpc, expressed in the temporal and nasal aspect of the retina and throughout the length of the dorsal midbrain. At 10.5 dpc this retinal pattern of expression persists, and extraneural sites of expression include the branchial region, limb buds and intestine. Also highly expressed in the alar mesencephalon and the rhombencephalic basal plate from 10.5 dpc to 14.5 dpc, and in the posterior third of the tectum and the presumptive gut wall. Also strongly expressed in the hindbrain, optic vesicle, maxillary and mandible process, paraxial mesoderm, developing digits and the umbilical cord.</text>
</comment>
<comment type="similarity">
    <text evidence="8">Belongs to the mab-21 family.</text>
</comment>
<gene>
    <name type="primary">Mab21l2</name>
</gene>
<reference key="1">
    <citation type="journal article" date="1999" name="Cytogenet. Cell Genet.">
        <title>Genomic cloning and chromosomal localization of the mouse Mab21l2 locus.</title>
        <authorList>
            <person name="Wong R.L.Y."/>
            <person name="Wong H.T."/>
            <person name="Chow K.L."/>
        </authorList>
    </citation>
    <scope>NUCLEOTIDE SEQUENCE [GENOMIC DNA]</scope>
</reference>
<reference key="2">
    <citation type="journal article" date="1999" name="Hum. Mol. Genet.">
        <title>Two murine and human homologs of mab-21, a cell fate determination gene involved in Caenorhabditis elegans neural development.</title>
        <authorList>
            <person name="Mariani M."/>
            <person name="Baldessari D."/>
            <person name="Francisconi S."/>
            <person name="Viggiano L."/>
            <person name="Rocchi M."/>
            <person name="Zappavigna V."/>
            <person name="Malgaretti N."/>
            <person name="Consalez G.G."/>
        </authorList>
    </citation>
    <scope>NUCLEOTIDE SEQUENCE [MRNA]</scope>
    <scope>SUBCELLULAR LOCATION</scope>
    <scope>TISSUE SPECIFICITY</scope>
    <scope>DEVELOPMENTAL STAGE</scope>
</reference>
<reference key="3">
    <citation type="journal article" date="1999" name="Mech. Dev.">
        <title>Developmental expression of Mab21l2 during mouse embryogenesis.</title>
        <authorList>
            <person name="Wong R.L.Y."/>
            <person name="Chan K.K.L."/>
            <person name="Chow K.L."/>
        </authorList>
    </citation>
    <scope>NUCLEOTIDE SEQUENCE [MRNA]</scope>
    <scope>DEVELOPMENTAL STAGE</scope>
</reference>
<reference key="4">
    <citation type="journal article" date="2002" name="Teratology">
        <title>Depletion of Mab21l1 and Mab21l2 messages in mouse embryo arrests axial turning, and impairs notochord and neural tube differentiation.</title>
        <authorList>
            <person name="Wong R.L.Y."/>
            <person name="Chow K.L."/>
        </authorList>
    </citation>
    <scope>NUCLEOTIDE SEQUENCE [GENOMIC DNA]</scope>
    <scope>FUNCTION</scope>
    <scope>DEVELOPMENTAL STAGE</scope>
</reference>
<reference key="5">
    <citation type="journal article" date="2005" name="Science">
        <title>The transcriptional landscape of the mammalian genome.</title>
        <authorList>
            <person name="Carninci P."/>
            <person name="Kasukawa T."/>
            <person name="Katayama S."/>
            <person name="Gough J."/>
            <person name="Frith M.C."/>
            <person name="Maeda N."/>
            <person name="Oyama R."/>
            <person name="Ravasi T."/>
            <person name="Lenhard B."/>
            <person name="Wells C."/>
            <person name="Kodzius R."/>
            <person name="Shimokawa K."/>
            <person name="Bajic V.B."/>
            <person name="Brenner S.E."/>
            <person name="Batalov S."/>
            <person name="Forrest A.R."/>
            <person name="Zavolan M."/>
            <person name="Davis M.J."/>
            <person name="Wilming L.G."/>
            <person name="Aidinis V."/>
            <person name="Allen J.E."/>
            <person name="Ambesi-Impiombato A."/>
            <person name="Apweiler R."/>
            <person name="Aturaliya R.N."/>
            <person name="Bailey T.L."/>
            <person name="Bansal M."/>
            <person name="Baxter L."/>
            <person name="Beisel K.W."/>
            <person name="Bersano T."/>
            <person name="Bono H."/>
            <person name="Chalk A.M."/>
            <person name="Chiu K.P."/>
            <person name="Choudhary V."/>
            <person name="Christoffels A."/>
            <person name="Clutterbuck D.R."/>
            <person name="Crowe M.L."/>
            <person name="Dalla E."/>
            <person name="Dalrymple B.P."/>
            <person name="de Bono B."/>
            <person name="Della Gatta G."/>
            <person name="di Bernardo D."/>
            <person name="Down T."/>
            <person name="Engstrom P."/>
            <person name="Fagiolini M."/>
            <person name="Faulkner G."/>
            <person name="Fletcher C.F."/>
            <person name="Fukushima T."/>
            <person name="Furuno M."/>
            <person name="Futaki S."/>
            <person name="Gariboldi M."/>
            <person name="Georgii-Hemming P."/>
            <person name="Gingeras T.R."/>
            <person name="Gojobori T."/>
            <person name="Green R.E."/>
            <person name="Gustincich S."/>
            <person name="Harbers M."/>
            <person name="Hayashi Y."/>
            <person name="Hensch T.K."/>
            <person name="Hirokawa N."/>
            <person name="Hill D."/>
            <person name="Huminiecki L."/>
            <person name="Iacono M."/>
            <person name="Ikeo K."/>
            <person name="Iwama A."/>
            <person name="Ishikawa T."/>
            <person name="Jakt M."/>
            <person name="Kanapin A."/>
            <person name="Katoh M."/>
            <person name="Kawasawa Y."/>
            <person name="Kelso J."/>
            <person name="Kitamura H."/>
            <person name="Kitano H."/>
            <person name="Kollias G."/>
            <person name="Krishnan S.P."/>
            <person name="Kruger A."/>
            <person name="Kummerfeld S.K."/>
            <person name="Kurochkin I.V."/>
            <person name="Lareau L.F."/>
            <person name="Lazarevic D."/>
            <person name="Lipovich L."/>
            <person name="Liu J."/>
            <person name="Liuni S."/>
            <person name="McWilliam S."/>
            <person name="Madan Babu M."/>
            <person name="Madera M."/>
            <person name="Marchionni L."/>
            <person name="Matsuda H."/>
            <person name="Matsuzawa S."/>
            <person name="Miki H."/>
            <person name="Mignone F."/>
            <person name="Miyake S."/>
            <person name="Morris K."/>
            <person name="Mottagui-Tabar S."/>
            <person name="Mulder N."/>
            <person name="Nakano N."/>
            <person name="Nakauchi H."/>
            <person name="Ng P."/>
            <person name="Nilsson R."/>
            <person name="Nishiguchi S."/>
            <person name="Nishikawa S."/>
            <person name="Nori F."/>
            <person name="Ohara O."/>
            <person name="Okazaki Y."/>
            <person name="Orlando V."/>
            <person name="Pang K.C."/>
            <person name="Pavan W.J."/>
            <person name="Pavesi G."/>
            <person name="Pesole G."/>
            <person name="Petrovsky N."/>
            <person name="Piazza S."/>
            <person name="Reed J."/>
            <person name="Reid J.F."/>
            <person name="Ring B.Z."/>
            <person name="Ringwald M."/>
            <person name="Rost B."/>
            <person name="Ruan Y."/>
            <person name="Salzberg S.L."/>
            <person name="Sandelin A."/>
            <person name="Schneider C."/>
            <person name="Schoenbach C."/>
            <person name="Sekiguchi K."/>
            <person name="Semple C.A."/>
            <person name="Seno S."/>
            <person name="Sessa L."/>
            <person name="Sheng Y."/>
            <person name="Shibata Y."/>
            <person name="Shimada H."/>
            <person name="Shimada K."/>
            <person name="Silva D."/>
            <person name="Sinclair B."/>
            <person name="Sperling S."/>
            <person name="Stupka E."/>
            <person name="Sugiura K."/>
            <person name="Sultana R."/>
            <person name="Takenaka Y."/>
            <person name="Taki K."/>
            <person name="Tammoja K."/>
            <person name="Tan S.L."/>
            <person name="Tang S."/>
            <person name="Taylor M.S."/>
            <person name="Tegner J."/>
            <person name="Teichmann S.A."/>
            <person name="Ueda H.R."/>
            <person name="van Nimwegen E."/>
            <person name="Verardo R."/>
            <person name="Wei C.L."/>
            <person name="Yagi K."/>
            <person name="Yamanishi H."/>
            <person name="Zabarovsky E."/>
            <person name="Zhu S."/>
            <person name="Zimmer A."/>
            <person name="Hide W."/>
            <person name="Bult C."/>
            <person name="Grimmond S.M."/>
            <person name="Teasdale R.D."/>
            <person name="Liu E.T."/>
            <person name="Brusic V."/>
            <person name="Quackenbush J."/>
            <person name="Wahlestedt C."/>
            <person name="Mattick J.S."/>
            <person name="Hume D.A."/>
            <person name="Kai C."/>
            <person name="Sasaki D."/>
            <person name="Tomaru Y."/>
            <person name="Fukuda S."/>
            <person name="Kanamori-Katayama M."/>
            <person name="Suzuki M."/>
            <person name="Aoki J."/>
            <person name="Arakawa T."/>
            <person name="Iida J."/>
            <person name="Imamura K."/>
            <person name="Itoh M."/>
            <person name="Kato T."/>
            <person name="Kawaji H."/>
            <person name="Kawagashira N."/>
            <person name="Kawashima T."/>
            <person name="Kojima M."/>
            <person name="Kondo S."/>
            <person name="Konno H."/>
            <person name="Nakano K."/>
            <person name="Ninomiya N."/>
            <person name="Nishio T."/>
            <person name="Okada M."/>
            <person name="Plessy C."/>
            <person name="Shibata K."/>
            <person name="Shiraki T."/>
            <person name="Suzuki S."/>
            <person name="Tagami M."/>
            <person name="Waki K."/>
            <person name="Watahiki A."/>
            <person name="Okamura-Oho Y."/>
            <person name="Suzuki H."/>
            <person name="Kawai J."/>
            <person name="Hayashizaki Y."/>
        </authorList>
    </citation>
    <scope>NUCLEOTIDE SEQUENCE [LARGE SCALE MRNA]</scope>
    <source>
        <strain>C57BL/6J</strain>
        <tissue>Eye</tissue>
    </source>
</reference>
<reference key="6">
    <citation type="journal article" date="2004" name="Genome Res.">
        <title>The status, quality, and expansion of the NIH full-length cDNA project: the Mammalian Gene Collection (MGC).</title>
        <authorList>
            <consortium name="The MGC Project Team"/>
        </authorList>
    </citation>
    <scope>NUCLEOTIDE SEQUENCE [LARGE SCALE MRNA]</scope>
    <source>
        <tissue>Eye</tissue>
    </source>
</reference>
<reference key="7">
    <citation type="journal article" date="2003" name="Development">
        <title>Cell-autonomous involvement of Mab21l1 is essential for lens placode development.</title>
        <authorList>
            <person name="Yamada R."/>
            <person name="Mizutani-Koseki Y."/>
            <person name="Hasegawa T."/>
            <person name="Osumi N."/>
            <person name="Koseki H."/>
            <person name="Takahashi N."/>
        </authorList>
    </citation>
    <scope>DEVELOPMENTAL STAGE</scope>
</reference>
<reference key="8">
    <citation type="journal article" date="2004" name="Dev. Biol.">
        <title>Requirement for Mab21l2 during development of murine retina and ventral body wall.</title>
        <authorList>
            <person name="Yamada R."/>
            <person name="Mizutani-Koseki Y."/>
            <person name="Koseki H."/>
            <person name="Takahashi N."/>
        </authorList>
    </citation>
    <scope>FUNCTION</scope>
    <scope>DEVELOPMENTAL STAGE</scope>
</reference>
<reference key="9">
    <citation type="journal article" date="2014" name="Am. J. Hum. Genet.">
        <title>Monoallelic and biallelic mutations in MAB21L2 cause a spectrum of major eye malformations.</title>
        <authorList>
            <consortium name="UK10K"/>
            <consortium name="Baylor-Hopkins Center for Mendelian Genomics"/>
            <person name="Rainger J."/>
            <person name="Pehlivan D."/>
            <person name="Johansson S."/>
            <person name="Bengani H."/>
            <person name="Sanchez-Pulido L."/>
            <person name="Williamson K.A."/>
            <person name="Ture M."/>
            <person name="Barker H."/>
            <person name="Rosendahl K."/>
            <person name="Spranger J."/>
            <person name="Horn D."/>
            <person name="Meynert A."/>
            <person name="Floyd J.A."/>
            <person name="Prescott T."/>
            <person name="Anderson C.A."/>
            <person name="Rainger J.K."/>
            <person name="Karaca E."/>
            <person name="Gonzaga-Jauregui C."/>
            <person name="Jhangiani S."/>
            <person name="Muzny D.M."/>
            <person name="Seawright A."/>
            <person name="Soares D.C."/>
            <person name="Kharbanda M."/>
            <person name="Murday V."/>
            <person name="Finch A."/>
            <person name="Gibbs R.A."/>
            <person name="van Heyningen V."/>
            <person name="Taylor M.S."/>
            <person name="Yakut T."/>
            <person name="Knappskog P.M."/>
            <person name="Hurles M.E."/>
            <person name="Ponting C.P."/>
            <person name="Lupski J.R."/>
            <person name="Houge G."/>
            <person name="FitzPatrick D.R."/>
        </authorList>
    </citation>
    <scope>TISSUE SPECIFICITY</scope>
</reference>
<proteinExistence type="evidence at transcript level"/>
<protein>
    <recommendedName>
        <fullName>Protein mab-21-like 2</fullName>
    </recommendedName>
</protein>
<evidence type="ECO:0000250" key="1">
    <source>
        <dbReference type="UniProtKB" id="Q9Y586"/>
    </source>
</evidence>
<evidence type="ECO:0000269" key="2">
    <source>
    </source>
</evidence>
<evidence type="ECO:0000269" key="3">
    <source>
    </source>
</evidence>
<evidence type="ECO:0000269" key="4">
    <source>
    </source>
</evidence>
<evidence type="ECO:0000269" key="5">
    <source>
    </source>
</evidence>
<evidence type="ECO:0000269" key="6">
    <source>
    </source>
</evidence>
<evidence type="ECO:0000269" key="7">
    <source>
    </source>
</evidence>
<evidence type="ECO:0000305" key="8"/>
<feature type="chain" id="PRO_0000312788" description="Protein mab-21-like 2">
    <location>
        <begin position="1"/>
        <end position="359"/>
    </location>
</feature>
<feature type="sequence conflict" description="In Ref. 3; AAD39141 and 4; AAK49026." evidence="8" ref="3 4">
    <original>AV</original>
    <variation>PC</variation>
    <location>
        <begin position="98"/>
        <end position="99"/>
    </location>
</feature>
<feature type="sequence conflict" description="In Ref. 2; AAD40478." evidence="8" ref="2">
    <original>L</original>
    <variation>Q</variation>
    <location>
        <position position="254"/>
    </location>
</feature>
<sequence>MIAAQAKLVYQLNKYYTERCQARKAAIAKTIREVCKVVSDVLKEVEVQEPRFISSLSEIDARYEGLEVISPTEFEVVLYLNQMGVFNFVDDGSLPGCAVLKLSDGRKRSMSLWVEFITASGYLSARKIRSRFQTLVAQAVDKCSYRDVVKMIADTSEVKLRIRERYVVQITPAFKCTGIWPRSAAQWPMPHIPWPGPNRVAEVKAEGFNLLSKECYSLTGKQSSAESDAWVLQFGEAENRLLMGGCRNKCLSVLKTLRDRHLELPGQPLNNYHMKTLLLYECEKHPRETDWDEACLGDRLNGILLQLISCLQCRRCPHYFLPNLDLFQGKPHSALESAAKQTWRLAREILTNPKSLDKL</sequence>
<accession>Q8BPP1</accession>
<accession>Q9R1B2</accession>
<accession>Q9WVF2</accession>